<dbReference type="EMBL" id="BC091454">
    <property type="protein sequence ID" value="AAH91454.1"/>
    <property type="molecule type" value="mRNA"/>
</dbReference>
<dbReference type="SMR" id="Q5BJJ7"/>
<dbReference type="FunCoup" id="Q5BJJ7">
    <property type="interactions" value="1747"/>
</dbReference>
<dbReference type="STRING" id="7955.ENSDARP00000011145"/>
<dbReference type="PaxDb" id="7955-ENSDARP00000011145"/>
<dbReference type="AGR" id="ZFIN:ZDB-GENE-050320-39"/>
<dbReference type="ZFIN" id="ZDB-GENE-050320-39">
    <property type="gene designation" value="bccip"/>
</dbReference>
<dbReference type="eggNOG" id="KOG3034">
    <property type="taxonomic scope" value="Eukaryota"/>
</dbReference>
<dbReference type="InParanoid" id="Q5BJJ7"/>
<dbReference type="PhylomeDB" id="Q5BJJ7"/>
<dbReference type="PRO" id="PR:Q5BJJ7"/>
<dbReference type="Proteomes" id="UP000000437">
    <property type="component" value="Unplaced"/>
</dbReference>
<dbReference type="GO" id="GO:0005814">
    <property type="term" value="C:centriole"/>
    <property type="evidence" value="ECO:0000250"/>
    <property type="project" value="UniProtKB"/>
</dbReference>
<dbReference type="GO" id="GO:0005813">
    <property type="term" value="C:centrosome"/>
    <property type="evidence" value="ECO:0000250"/>
    <property type="project" value="UniProtKB"/>
</dbReference>
<dbReference type="GO" id="GO:0005737">
    <property type="term" value="C:cytoplasm"/>
    <property type="evidence" value="ECO:0007669"/>
    <property type="project" value="UniProtKB-KW"/>
</dbReference>
<dbReference type="GO" id="GO:0097431">
    <property type="term" value="C:mitotic spindle pole"/>
    <property type="evidence" value="ECO:0000250"/>
    <property type="project" value="UniProtKB"/>
</dbReference>
<dbReference type="GO" id="GO:0005634">
    <property type="term" value="C:nucleus"/>
    <property type="evidence" value="ECO:0000318"/>
    <property type="project" value="GO_Central"/>
</dbReference>
<dbReference type="GO" id="GO:0006281">
    <property type="term" value="P:DNA repair"/>
    <property type="evidence" value="ECO:0007669"/>
    <property type="project" value="UniProtKB-KW"/>
</dbReference>
<dbReference type="GO" id="GO:0034453">
    <property type="term" value="P:microtubule anchoring"/>
    <property type="evidence" value="ECO:0000250"/>
    <property type="project" value="UniProtKB"/>
</dbReference>
<dbReference type="GO" id="GO:0000226">
    <property type="term" value="P:microtubule cytoskeleton organization"/>
    <property type="evidence" value="ECO:0000250"/>
    <property type="project" value="UniProtKB"/>
</dbReference>
<dbReference type="GO" id="GO:0090307">
    <property type="term" value="P:mitotic spindle assembly"/>
    <property type="evidence" value="ECO:0000250"/>
    <property type="project" value="UniProtKB"/>
</dbReference>
<dbReference type="GO" id="GO:0007052">
    <property type="term" value="P:mitotic spindle organization"/>
    <property type="evidence" value="ECO:0000250"/>
    <property type="project" value="UniProtKB"/>
</dbReference>
<dbReference type="InterPro" id="IPR025602">
    <property type="entry name" value="BCP1_family"/>
</dbReference>
<dbReference type="PANTHER" id="PTHR13261">
    <property type="entry name" value="BRCA2 AND CDKN1A INTERACTING PROTEIN"/>
    <property type="match status" value="1"/>
</dbReference>
<dbReference type="PANTHER" id="PTHR13261:SF0">
    <property type="entry name" value="BRCA2 AND CDKN1A-INTERACTING PROTEIN"/>
    <property type="match status" value="1"/>
</dbReference>
<dbReference type="Pfam" id="PF13862">
    <property type="entry name" value="BCCIP"/>
    <property type="match status" value="1"/>
</dbReference>
<dbReference type="PIRSF" id="PIRSF028983">
    <property type="entry name" value="BCP1"/>
    <property type="match status" value="1"/>
</dbReference>
<name>BCCIP_DANRE</name>
<evidence type="ECO:0000250" key="1">
    <source>
        <dbReference type="UniProtKB" id="Q9P287"/>
    </source>
</evidence>
<evidence type="ECO:0000256" key="2">
    <source>
        <dbReference type="SAM" id="MobiDB-lite"/>
    </source>
</evidence>
<evidence type="ECO:0000305" key="3"/>
<reference key="1">
    <citation type="submission" date="2005-03" db="EMBL/GenBank/DDBJ databases">
        <authorList>
            <consortium name="NIH - Zebrafish Gene Collection (ZGC) project"/>
        </authorList>
    </citation>
    <scope>NUCLEOTIDE SEQUENCE [LARGE SCALE MRNA]</scope>
    <source>
        <tissue>Olfactory epithelium</tissue>
    </source>
</reference>
<comment type="function">
    <text evidence="1">During interphase, required for microtubule organizing and anchoring activities. During mitosis, required for the organization and stabilization of the spindle pole. May promote cell cycle arrest and DNA repair.</text>
</comment>
<comment type="subcellular location">
    <subcellularLocation>
        <location evidence="1">Nucleus</location>
    </subcellularLocation>
    <subcellularLocation>
        <location evidence="1">Cytoplasm</location>
        <location evidence="1">Cytoskeleton</location>
        <location evidence="1">Microtubule organizing center</location>
        <location evidence="1">Centrosome</location>
        <location evidence="1">Centriole</location>
    </subcellularLocation>
    <subcellularLocation>
        <location evidence="1">Cytoplasm</location>
        <location evidence="1">Cytoskeleton</location>
        <location evidence="1">Spindle pole</location>
    </subcellularLocation>
</comment>
<comment type="similarity">
    <text evidence="3">Belongs to the BCP1 family.</text>
</comment>
<proteinExistence type="evidence at transcript level"/>
<organism>
    <name type="scientific">Danio rerio</name>
    <name type="common">Zebrafish</name>
    <name type="synonym">Brachydanio rerio</name>
    <dbReference type="NCBI Taxonomy" id="7955"/>
    <lineage>
        <taxon>Eukaryota</taxon>
        <taxon>Metazoa</taxon>
        <taxon>Chordata</taxon>
        <taxon>Craniata</taxon>
        <taxon>Vertebrata</taxon>
        <taxon>Euteleostomi</taxon>
        <taxon>Actinopterygii</taxon>
        <taxon>Neopterygii</taxon>
        <taxon>Teleostei</taxon>
        <taxon>Ostariophysi</taxon>
        <taxon>Cypriniformes</taxon>
        <taxon>Danionidae</taxon>
        <taxon>Danioninae</taxon>
        <taxon>Danio</taxon>
    </lineage>
</organism>
<gene>
    <name type="primary">bccip</name>
    <name type="ORF">zgc:110272</name>
</gene>
<feature type="chain" id="PRO_0000249689" description="Protein BCCIP homolog">
    <location>
        <begin position="1"/>
        <end position="301"/>
    </location>
</feature>
<feature type="region of interest" description="Disordered" evidence="2">
    <location>
        <begin position="1"/>
        <end position="43"/>
    </location>
</feature>
<feature type="compositionally biased region" description="Acidic residues" evidence="2">
    <location>
        <begin position="18"/>
        <end position="43"/>
    </location>
</feature>
<protein>
    <recommendedName>
        <fullName>Protein BCCIP homolog</fullName>
    </recommendedName>
</protein>
<sequence length="301" mass="33884">MASSAKRRAVETGQNPQDSDESSDEGLEDSGDDDSENSEEEVNEEVIVDFEAHTISDNDFHGIKTLLQQLFLKCHVNTSDLTDIIIQQNHIGSVIRQAEVPEDSDDEGDPDEVFGFISMVNLTERQGVECLEKLKDMILDQCVKCSTPDGQERMENLLQGNAQSVGLLLSERFVNVPPQIALPLHKQLQKEMAEAQRTNKPSGKCQFCLMISKTCKPLKKKSISAGDQAKDELLFVNDEEECFYEQATVKFSYCVQDEADSCATGKWSYDDEPMKPFRTVMVIPMDRMDTIMQKMTDYLTV</sequence>
<keyword id="KW-0131">Cell cycle</keyword>
<keyword id="KW-0963">Cytoplasm</keyword>
<keyword id="KW-0206">Cytoskeleton</keyword>
<keyword id="KW-0227">DNA damage</keyword>
<keyword id="KW-0234">DNA repair</keyword>
<keyword id="KW-0539">Nucleus</keyword>
<keyword id="KW-1185">Reference proteome</keyword>
<accession>Q5BJJ7</accession>